<name>MTNC_SHESW</name>
<organism>
    <name type="scientific">Shewanella sp. (strain W3-18-1)</name>
    <dbReference type="NCBI Taxonomy" id="351745"/>
    <lineage>
        <taxon>Bacteria</taxon>
        <taxon>Pseudomonadati</taxon>
        <taxon>Pseudomonadota</taxon>
        <taxon>Gammaproteobacteria</taxon>
        <taxon>Alteromonadales</taxon>
        <taxon>Shewanellaceae</taxon>
        <taxon>Shewanella</taxon>
    </lineage>
</organism>
<evidence type="ECO:0000255" key="1">
    <source>
        <dbReference type="HAMAP-Rule" id="MF_01681"/>
    </source>
</evidence>
<sequence>MGIRAIVVDTAGTTTDLNFIQDVLFPYSVKALPDFLEQNQHNVLVENCICDTKDIALEPEADLARVTEILQQWVNEDRKATPLKTLQGLIWKQGYAHGEFKGHIFPDFIEAVKRFSAQNLRIYSFSSGSVDAQKLLFSHSDGGDLTEMFNGHFDTRTGNKLDKQAYCNILNTISLSPKQVLFVSDVIEELKAADAAGMMTCQMVRDSKQRTGEFHKISSFDELLIE</sequence>
<reference key="1">
    <citation type="submission" date="2006-12" db="EMBL/GenBank/DDBJ databases">
        <title>Complete sequence of Shewanella sp. W3-18-1.</title>
        <authorList>
            <consortium name="US DOE Joint Genome Institute"/>
            <person name="Copeland A."/>
            <person name="Lucas S."/>
            <person name="Lapidus A."/>
            <person name="Barry K."/>
            <person name="Detter J.C."/>
            <person name="Glavina del Rio T."/>
            <person name="Hammon N."/>
            <person name="Israni S."/>
            <person name="Dalin E."/>
            <person name="Tice H."/>
            <person name="Pitluck S."/>
            <person name="Chain P."/>
            <person name="Malfatti S."/>
            <person name="Shin M."/>
            <person name="Vergez L."/>
            <person name="Schmutz J."/>
            <person name="Larimer F."/>
            <person name="Land M."/>
            <person name="Hauser L."/>
            <person name="Kyrpides N."/>
            <person name="Lykidis A."/>
            <person name="Tiedje J."/>
            <person name="Richardson P."/>
        </authorList>
    </citation>
    <scope>NUCLEOTIDE SEQUENCE [LARGE SCALE GENOMIC DNA]</scope>
    <source>
        <strain>W3-18-1</strain>
    </source>
</reference>
<feature type="chain" id="PRO_0000357411" description="Enolase-phosphatase E1">
    <location>
        <begin position="1"/>
        <end position="226"/>
    </location>
</feature>
<keyword id="KW-0028">Amino-acid biosynthesis</keyword>
<keyword id="KW-0378">Hydrolase</keyword>
<keyword id="KW-0460">Magnesium</keyword>
<keyword id="KW-0479">Metal-binding</keyword>
<keyword id="KW-0486">Methionine biosynthesis</keyword>
<protein>
    <recommendedName>
        <fullName evidence="1">Enolase-phosphatase E1</fullName>
        <ecNumber evidence="1">3.1.3.77</ecNumber>
    </recommendedName>
    <alternativeName>
        <fullName evidence="1">2,3-diketo-5-methylthio-1-phosphopentane phosphatase</fullName>
    </alternativeName>
</protein>
<proteinExistence type="inferred from homology"/>
<dbReference type="EC" id="3.1.3.77" evidence="1"/>
<dbReference type="EMBL" id="CP000503">
    <property type="protein sequence ID" value="ABM26812.1"/>
    <property type="molecule type" value="Genomic_DNA"/>
</dbReference>
<dbReference type="RefSeq" id="WP_011791234.1">
    <property type="nucleotide sequence ID" value="NC_008750.1"/>
</dbReference>
<dbReference type="SMR" id="A1RQ67"/>
<dbReference type="GeneID" id="67445413"/>
<dbReference type="KEGG" id="shw:Sputw3181_4008"/>
<dbReference type="HOGENOM" id="CLU_023273_0_0_6"/>
<dbReference type="UniPathway" id="UPA00904">
    <property type="reaction ID" value="UER00876"/>
</dbReference>
<dbReference type="UniPathway" id="UPA00904">
    <property type="reaction ID" value="UER00877"/>
</dbReference>
<dbReference type="Proteomes" id="UP000002597">
    <property type="component" value="Chromosome"/>
</dbReference>
<dbReference type="GO" id="GO:0043715">
    <property type="term" value="F:2,3-diketo-5-methylthiopentyl-1-phosphate enolase activity"/>
    <property type="evidence" value="ECO:0007669"/>
    <property type="project" value="UniProtKB-UniRule"/>
</dbReference>
<dbReference type="GO" id="GO:0043716">
    <property type="term" value="F:2-hydroxy-3-keto-5-methylthiopentenyl-1-phosphate phosphatase activity"/>
    <property type="evidence" value="ECO:0007669"/>
    <property type="project" value="UniProtKB-UniRule"/>
</dbReference>
<dbReference type="GO" id="GO:0043874">
    <property type="term" value="F:acireductone synthase activity"/>
    <property type="evidence" value="ECO:0007669"/>
    <property type="project" value="UniProtKB-EC"/>
</dbReference>
<dbReference type="GO" id="GO:0000287">
    <property type="term" value="F:magnesium ion binding"/>
    <property type="evidence" value="ECO:0007669"/>
    <property type="project" value="UniProtKB-UniRule"/>
</dbReference>
<dbReference type="GO" id="GO:0019509">
    <property type="term" value="P:L-methionine salvage from methylthioadenosine"/>
    <property type="evidence" value="ECO:0007669"/>
    <property type="project" value="UniProtKB-UniRule"/>
</dbReference>
<dbReference type="CDD" id="cd01629">
    <property type="entry name" value="HAD_EP"/>
    <property type="match status" value="1"/>
</dbReference>
<dbReference type="FunFam" id="1.10.720.60:FF:000008">
    <property type="entry name" value="Enolase-phosphatase E1"/>
    <property type="match status" value="1"/>
</dbReference>
<dbReference type="Gene3D" id="1.10.720.60">
    <property type="match status" value="1"/>
</dbReference>
<dbReference type="Gene3D" id="3.40.50.1000">
    <property type="entry name" value="HAD superfamily/HAD-like"/>
    <property type="match status" value="1"/>
</dbReference>
<dbReference type="HAMAP" id="MF_01681">
    <property type="entry name" value="Salvage_MtnC"/>
    <property type="match status" value="1"/>
</dbReference>
<dbReference type="InterPro" id="IPR023943">
    <property type="entry name" value="Enolase-ppase_E1"/>
</dbReference>
<dbReference type="InterPro" id="IPR036412">
    <property type="entry name" value="HAD-like_sf"/>
</dbReference>
<dbReference type="InterPro" id="IPR006439">
    <property type="entry name" value="HAD-SF_hydro_IA"/>
</dbReference>
<dbReference type="InterPro" id="IPR023214">
    <property type="entry name" value="HAD_sf"/>
</dbReference>
<dbReference type="NCBIfam" id="TIGR01691">
    <property type="entry name" value="enolase-ppase"/>
    <property type="match status" value="1"/>
</dbReference>
<dbReference type="NCBIfam" id="TIGR01549">
    <property type="entry name" value="HAD-SF-IA-v1"/>
    <property type="match status" value="1"/>
</dbReference>
<dbReference type="PANTHER" id="PTHR20371">
    <property type="entry name" value="ENOLASE-PHOSPHATASE E1"/>
    <property type="match status" value="1"/>
</dbReference>
<dbReference type="PANTHER" id="PTHR20371:SF1">
    <property type="entry name" value="ENOLASE-PHOSPHATASE E1"/>
    <property type="match status" value="1"/>
</dbReference>
<dbReference type="Pfam" id="PF00702">
    <property type="entry name" value="Hydrolase"/>
    <property type="match status" value="1"/>
</dbReference>
<dbReference type="PRINTS" id="PR00413">
    <property type="entry name" value="HADHALOGNASE"/>
</dbReference>
<dbReference type="SFLD" id="SFLDG01129">
    <property type="entry name" value="C1.5:_HAD__Beta-PGM__Phosphata"/>
    <property type="match status" value="1"/>
</dbReference>
<dbReference type="SFLD" id="SFLDF00044">
    <property type="entry name" value="enolase-phosphatase"/>
    <property type="match status" value="1"/>
</dbReference>
<dbReference type="SUPFAM" id="SSF56784">
    <property type="entry name" value="HAD-like"/>
    <property type="match status" value="1"/>
</dbReference>
<comment type="function">
    <text evidence="1">Bifunctional enzyme that catalyzes the enolization of 2,3-diketo-5-methylthiopentyl-1-phosphate (DK-MTP-1-P) into the intermediate 2-hydroxy-3-keto-5-methylthiopentenyl-1-phosphate (HK-MTPenyl-1-P), which is then dephosphorylated to form the acireductone 1,2-dihydroxy-3-keto-5-methylthiopentene (DHK-MTPene).</text>
</comment>
<comment type="catalytic activity">
    <reaction evidence="1">
        <text>5-methylsulfanyl-2,3-dioxopentyl phosphate + H2O = 1,2-dihydroxy-5-(methylsulfanyl)pent-1-en-3-one + phosphate</text>
        <dbReference type="Rhea" id="RHEA:21700"/>
        <dbReference type="ChEBI" id="CHEBI:15377"/>
        <dbReference type="ChEBI" id="CHEBI:43474"/>
        <dbReference type="ChEBI" id="CHEBI:49252"/>
        <dbReference type="ChEBI" id="CHEBI:58828"/>
        <dbReference type="EC" id="3.1.3.77"/>
    </reaction>
</comment>
<comment type="cofactor">
    <cofactor evidence="1">
        <name>Mg(2+)</name>
        <dbReference type="ChEBI" id="CHEBI:18420"/>
    </cofactor>
    <text evidence="1">Binds 1 Mg(2+) ion per subunit.</text>
</comment>
<comment type="pathway">
    <text evidence="1">Amino-acid biosynthesis; L-methionine biosynthesis via salvage pathway; L-methionine from S-methyl-5-thio-alpha-D-ribose 1-phosphate: step 3/6.</text>
</comment>
<comment type="pathway">
    <text evidence="1">Amino-acid biosynthesis; L-methionine biosynthesis via salvage pathway; L-methionine from S-methyl-5-thio-alpha-D-ribose 1-phosphate: step 4/6.</text>
</comment>
<comment type="subunit">
    <text evidence="1">Monomer.</text>
</comment>
<comment type="similarity">
    <text evidence="1">Belongs to the HAD-like hydrolase superfamily. MasA/MtnC family.</text>
</comment>
<gene>
    <name evidence="1" type="primary">mtnC</name>
    <name type="ordered locus">Sputw3181_4008</name>
</gene>
<accession>A1RQ67</accession>